<dbReference type="EMBL" id="AJ271090">
    <property type="protein sequence ID" value="CAB97487.1"/>
    <property type="molecule type" value="Genomic_DNA"/>
</dbReference>
<dbReference type="RefSeq" id="NP_001300719.1">
    <molecule id="Q9MYV1-1"/>
    <property type="nucleotide sequence ID" value="NM_001313790.2"/>
</dbReference>
<dbReference type="RefSeq" id="NP_001300720.1">
    <molecule id="Q9MYV1-1"/>
    <property type="nucleotide sequence ID" value="NM_001313791.2"/>
</dbReference>
<dbReference type="SMR" id="Q9MYV1"/>
<dbReference type="FunCoup" id="Q9MYV1">
    <property type="interactions" value="19"/>
</dbReference>
<dbReference type="STRING" id="9615.ENSCAFP00000046267"/>
<dbReference type="PaxDb" id="9615-ENSCAFP00000046267"/>
<dbReference type="Ensembl" id="ENSCAFT00000013581.5">
    <molecule id="Q9MYV1-1"/>
    <property type="protein sequence ID" value="ENSCAFP00000012566.2"/>
    <property type="gene ID" value="ENSCAFG00000008562.6"/>
</dbReference>
<dbReference type="Ensembl" id="ENSCAFT00030047151.1">
    <molecule id="Q9MYV1-1"/>
    <property type="protein sequence ID" value="ENSCAFP00030041221.1"/>
    <property type="gene ID" value="ENSCAFG00030025508.1"/>
</dbReference>
<dbReference type="Ensembl" id="ENSCAFT00040038162.1">
    <molecule id="Q9MYV1-1"/>
    <property type="protein sequence ID" value="ENSCAFP00040033271.1"/>
    <property type="gene ID" value="ENSCAFG00040020572.1"/>
</dbReference>
<dbReference type="Ensembl" id="ENSCAFT00845041436.1">
    <molecule id="Q9MYV1-1"/>
    <property type="protein sequence ID" value="ENSCAFP00845032491.1"/>
    <property type="gene ID" value="ENSCAFG00845023464.1"/>
</dbReference>
<dbReference type="GeneID" id="403946"/>
<dbReference type="KEGG" id="cfa:403946"/>
<dbReference type="CTD" id="796"/>
<dbReference type="VEuPathDB" id="HostDB:ENSCAFG00845023464"/>
<dbReference type="GeneTree" id="ENSGT00940000167380"/>
<dbReference type="HOGENOM" id="CLU_122444_1_0_1"/>
<dbReference type="InParanoid" id="Q9MYV1"/>
<dbReference type="OMA" id="TATCATH"/>
<dbReference type="OrthoDB" id="21288at33554"/>
<dbReference type="Reactome" id="R-CFA-419812">
    <property type="pathway name" value="Calcitonin-like ligand receptors"/>
</dbReference>
<dbReference type="Proteomes" id="UP000002254">
    <property type="component" value="Chromosome 21"/>
</dbReference>
<dbReference type="Proteomes" id="UP000694429">
    <property type="component" value="Chromosome 21"/>
</dbReference>
<dbReference type="Proteomes" id="UP000694542">
    <property type="component" value="Chromosome 21"/>
</dbReference>
<dbReference type="Proteomes" id="UP000805418">
    <property type="component" value="Chromosome 21"/>
</dbReference>
<dbReference type="Bgee" id="ENSCAFG00000008562">
    <property type="expression patterns" value="Expressed in spinal cord and 17 other cell types or tissues"/>
</dbReference>
<dbReference type="GO" id="GO:0005615">
    <property type="term" value="C:extracellular space"/>
    <property type="evidence" value="ECO:0000318"/>
    <property type="project" value="GO_Central"/>
</dbReference>
<dbReference type="GO" id="GO:0031716">
    <property type="term" value="F:calcitonin receptor binding"/>
    <property type="evidence" value="ECO:0000318"/>
    <property type="project" value="GO_Central"/>
</dbReference>
<dbReference type="GO" id="GO:0005179">
    <property type="term" value="F:hormone activity"/>
    <property type="evidence" value="ECO:0007669"/>
    <property type="project" value="UniProtKB-KW"/>
</dbReference>
<dbReference type="GO" id="GO:0007189">
    <property type="term" value="P:adenylate cyclase-activating G protein-coupled receptor signaling pathway"/>
    <property type="evidence" value="ECO:0000318"/>
    <property type="project" value="GO_Central"/>
</dbReference>
<dbReference type="GO" id="GO:0051480">
    <property type="term" value="P:regulation of cytosolic calcium ion concentration"/>
    <property type="evidence" value="ECO:0000318"/>
    <property type="project" value="GO_Central"/>
</dbReference>
<dbReference type="Gene3D" id="6.10.250.2190">
    <property type="match status" value="1"/>
</dbReference>
<dbReference type="InterPro" id="IPR021117">
    <property type="entry name" value="Calcitonin-like"/>
</dbReference>
<dbReference type="InterPro" id="IPR021116">
    <property type="entry name" value="Calcitonin/adrenomedullin"/>
</dbReference>
<dbReference type="InterPro" id="IPR018360">
    <property type="entry name" value="Calcitonin_CS"/>
</dbReference>
<dbReference type="InterPro" id="IPR015476">
    <property type="entry name" value="Calcitonin_gene-rel_peptide"/>
</dbReference>
<dbReference type="InterPro" id="IPR001693">
    <property type="entry name" value="Calcitonin_peptide-like"/>
</dbReference>
<dbReference type="PANTHER" id="PTHR10505:SF3">
    <property type="entry name" value="CALCITONIN GENE-RELATED PEPTIDE 2"/>
    <property type="match status" value="1"/>
</dbReference>
<dbReference type="PANTHER" id="PTHR10505">
    <property type="entry name" value="CALCITONIN-RELATED"/>
    <property type="match status" value="1"/>
</dbReference>
<dbReference type="Pfam" id="PF00214">
    <property type="entry name" value="Calc_CGRP_IAPP"/>
    <property type="match status" value="1"/>
</dbReference>
<dbReference type="PRINTS" id="PR00817">
    <property type="entry name" value="CALCITONINB"/>
</dbReference>
<dbReference type="SMART" id="SM00113">
    <property type="entry name" value="CALCITONIN"/>
    <property type="match status" value="1"/>
</dbReference>
<dbReference type="PROSITE" id="PS00258">
    <property type="entry name" value="CALCITONIN"/>
    <property type="match status" value="1"/>
</dbReference>
<accession>Q9MYV1</accession>
<gene>
    <name type="primary">CALCA</name>
    <name type="synonym">CALC</name>
    <name type="synonym">CCALCI</name>
</gene>
<evidence type="ECO:0000250" key="1"/>
<evidence type="ECO:0000250" key="2">
    <source>
        <dbReference type="UniProtKB" id="P06881"/>
    </source>
</evidence>
<evidence type="ECO:0000256" key="3">
    <source>
        <dbReference type="SAM" id="MobiDB-lite"/>
    </source>
</evidence>
<evidence type="ECO:0000269" key="4">
    <source>
    </source>
</evidence>
<evidence type="ECO:0000305" key="5"/>
<protein>
    <recommendedName>
        <fullName>Calcitonin gene-related peptide 1</fullName>
        <shortName evidence="2">CGRP1</shortName>
    </recommendedName>
    <alternativeName>
        <fullName>Alpha-type CGRP</fullName>
    </alternativeName>
    <alternativeName>
        <fullName>Calcitonin gene-related peptide I</fullName>
        <shortName>CGRP-I</shortName>
    </alternativeName>
</protein>
<feature type="signal peptide" evidence="4">
    <location>
        <begin position="1"/>
        <end position="25"/>
    </location>
</feature>
<feature type="propeptide" id="PRO_0000004041" evidence="1">
    <location>
        <begin position="26"/>
        <end position="80"/>
    </location>
</feature>
<feature type="peptide" id="PRO_0000004042" description="Calcitonin gene-related peptide 1">
    <location>
        <begin position="83"/>
        <end position="119"/>
    </location>
</feature>
<feature type="propeptide" id="PRO_0000004043" evidence="1">
    <location>
        <begin position="125"/>
        <end position="128"/>
    </location>
</feature>
<feature type="region of interest" description="Disordered" evidence="3">
    <location>
        <begin position="63"/>
        <end position="83"/>
    </location>
</feature>
<feature type="compositionally biased region" description="Polar residues" evidence="3">
    <location>
        <begin position="74"/>
        <end position="83"/>
    </location>
</feature>
<feature type="modified residue" description="Phenylalanine amide" evidence="1">
    <location>
        <position position="119"/>
    </location>
</feature>
<feature type="disulfide bond" evidence="2">
    <location>
        <begin position="84"/>
        <end position="89"/>
    </location>
</feature>
<feature type="sequence conflict" description="In Ref. 2; AA sequence." evidence="5" ref="2">
    <original>E</original>
    <variation>K</variation>
    <location>
        <position position="45"/>
    </location>
</feature>
<feature type="sequence conflict" description="In Ref. 2; AA sequence." evidence="5" ref="2">
    <original>L</original>
    <variation>N</variation>
    <location>
        <position position="49"/>
    </location>
</feature>
<reference key="1">
    <citation type="journal article" date="2000" name="Mamm. Genome">
        <title>Molecular analysis and chromosomal assignment of the canine CALC-I/alpha-CGRP gene.</title>
        <authorList>
            <person name="Wende S."/>
            <person name="Krempler A."/>
            <person name="Breen M."/>
            <person name="Brunnberg L."/>
            <person name="Brenig B."/>
        </authorList>
    </citation>
    <scope>NUCLEOTIDE SEQUENCE [GENOMIC DNA]</scope>
</reference>
<reference key="2">
    <citation type="journal article" date="1991" name="Regul. Pept.">
        <title>Elucidation of the sequence of canine (pro)-calcitonin. A molecular biological and protein chemical approach.</title>
        <authorList>
            <person name="Mol J.A."/>
            <person name="Kwant M.M."/>
            <person name="Arnold I.C.J."/>
            <person name="Hazewinkel H.A.W."/>
        </authorList>
    </citation>
    <scope>PROTEIN SEQUENCE OF 26-50</scope>
    <source>
        <tissue>Thyroid</tissue>
    </source>
</reference>
<name>CALCA_CANLF</name>
<proteinExistence type="evidence at protein level"/>
<organism>
    <name type="scientific">Canis lupus familiaris</name>
    <name type="common">Dog</name>
    <name type="synonym">Canis familiaris</name>
    <dbReference type="NCBI Taxonomy" id="9615"/>
    <lineage>
        <taxon>Eukaryota</taxon>
        <taxon>Metazoa</taxon>
        <taxon>Chordata</taxon>
        <taxon>Craniata</taxon>
        <taxon>Vertebrata</taxon>
        <taxon>Euteleostomi</taxon>
        <taxon>Mammalia</taxon>
        <taxon>Eutheria</taxon>
        <taxon>Laurasiatheria</taxon>
        <taxon>Carnivora</taxon>
        <taxon>Caniformia</taxon>
        <taxon>Canidae</taxon>
        <taxon>Canis</taxon>
    </lineage>
</organism>
<sequence>MGLWKSSPFLAFSILVLCQAGGLQAAPFRSALEGLPDPTALSEKEGRLLLAALVKAYVQRKNELEQEQEQETEGSSITAQKRSCNTATCVTHRLAGLLSRSGGVVKNNFVPTNVGSEAFGRRRRDLRA</sequence>
<keyword id="KW-0025">Alternative splicing</keyword>
<keyword id="KW-0027">Amidation</keyword>
<keyword id="KW-0165">Cleavage on pair of basic residues</keyword>
<keyword id="KW-0903">Direct protein sequencing</keyword>
<keyword id="KW-1015">Disulfide bond</keyword>
<keyword id="KW-0372">Hormone</keyword>
<keyword id="KW-1185">Reference proteome</keyword>
<keyword id="KW-0964">Secreted</keyword>
<keyword id="KW-0732">Signal</keyword>
<comment type="function">
    <text evidence="2">CGRP1/CALCA is a peptide hormone that induces vasodilation mediated by the CALCRL-RAMP1 receptor complex. Dilates a variety of vessels including the coronary, cerebral and systemic vasculature. Its abundance in the CNS also points toward a neurotransmitter or neuromodulator role. It also elevates platelet cAMP. CGRP1 can also bind and activate CALCR-RAMP1 (AMYR1) receptor complex.</text>
</comment>
<comment type="subcellular location">
    <subcellularLocation>
        <location evidence="2">Secreted</location>
    </subcellularLocation>
</comment>
<comment type="alternative products">
    <event type="alternative splicing"/>
    <isoform>
        <id>Q9MYV1-1</id>
        <name>Calcitonin-gene related peptide I</name>
        <sequence type="displayed"/>
    </isoform>
    <isoform>
        <id>P41547-1</id>
        <name>Calcitonin</name>
        <sequence type="external"/>
    </isoform>
</comment>
<comment type="similarity">
    <text evidence="5">Belongs to the calcitonin family.</text>
</comment>